<keyword id="KW-0143">Chaperone</keyword>
<keyword id="KW-0963">Cytoplasm</keyword>
<protein>
    <recommendedName>
        <fullName evidence="1">Regulatory protein ViaA</fullName>
    </recommendedName>
    <alternativeName>
        <fullName evidence="1">VWA interacting with AAA+ ATPase</fullName>
    </alternativeName>
</protein>
<name>VIAA_ECODH</name>
<accession>B1X9X3</accession>
<sequence length="483" mass="55907">MLTLDTLNVMLAVSEEGLIEEMIIALLASPQLAVFFEKFPRLKAAITDDVPRWREALRSRLKDARVPPELTEEVMCYQQSQLLSTPQFIVQLPQILDLLHRLNSPWAEQARQLVDANSTITSALHTLFLQRWRLSLIVQATTLNQQLLEEEREQLLSEVQERMTLSGQLEPILADNNTAAGRLWDMSAGQLKRGDYQLIVKYGEFLNEQPELKRLAEQLGRSREAKSIPRNDAQMETFRTMVREPATVPEQVDGLQQSDDILRLLPPELATLGITELEYEFYRRLVEKQLLTYRLHGESWREKVIERPVVHKDYDEQPRGPFIVCVDTSGSMGGFNEQCAKAFCLALMRIALAENRRCYIMLFSTEIVRYELSGPQGIEQAIRFLSQQFRGGTDLASCFRAIMERLQSREWFDADAVVISDFIAQRLPDDVTSKVKELQRVHQHRFHAVAMSAHGKPGIMRIFDHIWRFDTGMRSRLLRRWRR</sequence>
<feature type="chain" id="PRO_1000186147" description="Regulatory protein ViaA">
    <location>
        <begin position="1"/>
        <end position="483"/>
    </location>
</feature>
<gene>
    <name evidence="1" type="primary">viaA</name>
    <name type="ordered locus">ECDH10B_3933</name>
</gene>
<evidence type="ECO:0000255" key="1">
    <source>
        <dbReference type="HAMAP-Rule" id="MF_01626"/>
    </source>
</evidence>
<dbReference type="EMBL" id="CP000948">
    <property type="protein sequence ID" value="ACB04788.1"/>
    <property type="molecule type" value="Genomic_DNA"/>
</dbReference>
<dbReference type="RefSeq" id="WP_000956642.1">
    <property type="nucleotide sequence ID" value="NC_010473.1"/>
</dbReference>
<dbReference type="SMR" id="B1X9X3"/>
<dbReference type="GeneID" id="93778222"/>
<dbReference type="KEGG" id="ecd:ECDH10B_3933"/>
<dbReference type="HOGENOM" id="CLU_022130_0_0_6"/>
<dbReference type="GO" id="GO:0005829">
    <property type="term" value="C:cytosol"/>
    <property type="evidence" value="ECO:0007669"/>
    <property type="project" value="TreeGrafter"/>
</dbReference>
<dbReference type="CDD" id="cd01462">
    <property type="entry name" value="VWA_YIEM_type"/>
    <property type="match status" value="1"/>
</dbReference>
<dbReference type="Gene3D" id="3.40.50.410">
    <property type="entry name" value="von Willebrand factor, type A domain"/>
    <property type="match status" value="1"/>
</dbReference>
<dbReference type="HAMAP" id="MF_01626">
    <property type="entry name" value="ViaA"/>
    <property type="match status" value="1"/>
</dbReference>
<dbReference type="InterPro" id="IPR008912">
    <property type="entry name" value="Uncharacterised_CoxE"/>
</dbReference>
<dbReference type="InterPro" id="IPR023481">
    <property type="entry name" value="Uncharacterised_ViaA"/>
</dbReference>
<dbReference type="InterPro" id="IPR002035">
    <property type="entry name" value="VWF_A"/>
</dbReference>
<dbReference type="InterPro" id="IPR036465">
    <property type="entry name" value="vWFA_dom_sf"/>
</dbReference>
<dbReference type="NCBIfam" id="NF008230">
    <property type="entry name" value="PRK10997.1"/>
    <property type="match status" value="1"/>
</dbReference>
<dbReference type="PANTHER" id="PTHR36846">
    <property type="entry name" value="PROTEIN VIAA"/>
    <property type="match status" value="1"/>
</dbReference>
<dbReference type="PANTHER" id="PTHR36846:SF1">
    <property type="entry name" value="PROTEIN VIAA"/>
    <property type="match status" value="1"/>
</dbReference>
<dbReference type="Pfam" id="PF05762">
    <property type="entry name" value="VWA_CoxE"/>
    <property type="match status" value="1"/>
</dbReference>
<dbReference type="SMART" id="SM00327">
    <property type="entry name" value="VWA"/>
    <property type="match status" value="1"/>
</dbReference>
<dbReference type="SUPFAM" id="SSF53300">
    <property type="entry name" value="vWA-like"/>
    <property type="match status" value="1"/>
</dbReference>
<comment type="function">
    <text evidence="1">Component of the RavA-ViaA chaperone complex, which may act on the membrane to optimize the function of some of the respiratory chains. ViaA stimulates the ATPase activity of RavA.</text>
</comment>
<comment type="subunit">
    <text evidence="1">Homodimer. Interacts with RavA.</text>
</comment>
<comment type="subcellular location">
    <subcellularLocation>
        <location evidence="1">Cytoplasm</location>
    </subcellularLocation>
</comment>
<comment type="similarity">
    <text evidence="1">Belongs to the ViaA family.</text>
</comment>
<reference key="1">
    <citation type="journal article" date="2008" name="J. Bacteriol.">
        <title>The complete genome sequence of Escherichia coli DH10B: insights into the biology of a laboratory workhorse.</title>
        <authorList>
            <person name="Durfee T."/>
            <person name="Nelson R."/>
            <person name="Baldwin S."/>
            <person name="Plunkett G. III"/>
            <person name="Burland V."/>
            <person name="Mau B."/>
            <person name="Petrosino J.F."/>
            <person name="Qin X."/>
            <person name="Muzny D.M."/>
            <person name="Ayele M."/>
            <person name="Gibbs R.A."/>
            <person name="Csorgo B."/>
            <person name="Posfai G."/>
            <person name="Weinstock G.M."/>
            <person name="Blattner F.R."/>
        </authorList>
    </citation>
    <scope>NUCLEOTIDE SEQUENCE [LARGE SCALE GENOMIC DNA]</scope>
    <source>
        <strain>K12 / DH10B</strain>
    </source>
</reference>
<organism>
    <name type="scientific">Escherichia coli (strain K12 / DH10B)</name>
    <dbReference type="NCBI Taxonomy" id="316385"/>
    <lineage>
        <taxon>Bacteria</taxon>
        <taxon>Pseudomonadati</taxon>
        <taxon>Pseudomonadota</taxon>
        <taxon>Gammaproteobacteria</taxon>
        <taxon>Enterobacterales</taxon>
        <taxon>Enterobacteriaceae</taxon>
        <taxon>Escherichia</taxon>
    </lineage>
</organism>
<proteinExistence type="inferred from homology"/>